<accession>Q8XZI8</accession>
<keyword id="KW-0963">Cytoplasm</keyword>
<keyword id="KW-0648">Protein biosynthesis</keyword>
<keyword id="KW-1185">Reference proteome</keyword>
<dbReference type="EMBL" id="AL646052">
    <property type="protein sequence ID" value="CAD15109.1"/>
    <property type="molecule type" value="Genomic_DNA"/>
</dbReference>
<dbReference type="RefSeq" id="WP_011001356.1">
    <property type="nucleotide sequence ID" value="NC_003295.1"/>
</dbReference>
<dbReference type="SMR" id="Q8XZI8"/>
<dbReference type="STRING" id="267608.RSc1407"/>
<dbReference type="EnsemblBacteria" id="CAD15109">
    <property type="protein sequence ID" value="CAD15109"/>
    <property type="gene ID" value="RSc1407"/>
</dbReference>
<dbReference type="KEGG" id="rso:RSc1407"/>
<dbReference type="eggNOG" id="COG0233">
    <property type="taxonomic scope" value="Bacteria"/>
</dbReference>
<dbReference type="HOGENOM" id="CLU_073981_2_0_4"/>
<dbReference type="Proteomes" id="UP000001436">
    <property type="component" value="Chromosome"/>
</dbReference>
<dbReference type="GO" id="GO:0005829">
    <property type="term" value="C:cytosol"/>
    <property type="evidence" value="ECO:0007669"/>
    <property type="project" value="GOC"/>
</dbReference>
<dbReference type="GO" id="GO:0043023">
    <property type="term" value="F:ribosomal large subunit binding"/>
    <property type="evidence" value="ECO:0007669"/>
    <property type="project" value="TreeGrafter"/>
</dbReference>
<dbReference type="GO" id="GO:0002184">
    <property type="term" value="P:cytoplasmic translational termination"/>
    <property type="evidence" value="ECO:0007669"/>
    <property type="project" value="TreeGrafter"/>
</dbReference>
<dbReference type="CDD" id="cd00520">
    <property type="entry name" value="RRF"/>
    <property type="match status" value="1"/>
</dbReference>
<dbReference type="FunFam" id="1.10.132.20:FF:000001">
    <property type="entry name" value="Ribosome-recycling factor"/>
    <property type="match status" value="1"/>
</dbReference>
<dbReference type="FunFam" id="3.30.1360.40:FF:000001">
    <property type="entry name" value="Ribosome-recycling factor"/>
    <property type="match status" value="1"/>
</dbReference>
<dbReference type="Gene3D" id="3.30.1360.40">
    <property type="match status" value="1"/>
</dbReference>
<dbReference type="Gene3D" id="1.10.132.20">
    <property type="entry name" value="Ribosome-recycling factor"/>
    <property type="match status" value="1"/>
</dbReference>
<dbReference type="HAMAP" id="MF_00040">
    <property type="entry name" value="RRF"/>
    <property type="match status" value="1"/>
</dbReference>
<dbReference type="InterPro" id="IPR002661">
    <property type="entry name" value="Ribosome_recyc_fac"/>
</dbReference>
<dbReference type="InterPro" id="IPR023584">
    <property type="entry name" value="Ribosome_recyc_fac_dom"/>
</dbReference>
<dbReference type="InterPro" id="IPR036191">
    <property type="entry name" value="RRF_sf"/>
</dbReference>
<dbReference type="NCBIfam" id="TIGR00496">
    <property type="entry name" value="frr"/>
    <property type="match status" value="1"/>
</dbReference>
<dbReference type="PANTHER" id="PTHR20982:SF3">
    <property type="entry name" value="MITOCHONDRIAL RIBOSOME RECYCLING FACTOR PSEUDO 1"/>
    <property type="match status" value="1"/>
</dbReference>
<dbReference type="PANTHER" id="PTHR20982">
    <property type="entry name" value="RIBOSOME RECYCLING FACTOR"/>
    <property type="match status" value="1"/>
</dbReference>
<dbReference type="Pfam" id="PF01765">
    <property type="entry name" value="RRF"/>
    <property type="match status" value="1"/>
</dbReference>
<dbReference type="SUPFAM" id="SSF55194">
    <property type="entry name" value="Ribosome recycling factor, RRF"/>
    <property type="match status" value="1"/>
</dbReference>
<protein>
    <recommendedName>
        <fullName evidence="1">Ribosome-recycling factor</fullName>
        <shortName evidence="1">RRF</shortName>
    </recommendedName>
    <alternativeName>
        <fullName evidence="1">Ribosome-releasing factor</fullName>
    </alternativeName>
</protein>
<gene>
    <name evidence="1" type="primary">frr</name>
    <name type="synonym">rrf</name>
    <name type="ordered locus">RSc1407</name>
    <name type="ORF">RS05285</name>
</gene>
<evidence type="ECO:0000255" key="1">
    <source>
        <dbReference type="HAMAP-Rule" id="MF_00040"/>
    </source>
</evidence>
<organism>
    <name type="scientific">Ralstonia nicotianae (strain ATCC BAA-1114 / GMI1000)</name>
    <name type="common">Ralstonia solanacearum</name>
    <dbReference type="NCBI Taxonomy" id="267608"/>
    <lineage>
        <taxon>Bacteria</taxon>
        <taxon>Pseudomonadati</taxon>
        <taxon>Pseudomonadota</taxon>
        <taxon>Betaproteobacteria</taxon>
        <taxon>Burkholderiales</taxon>
        <taxon>Burkholderiaceae</taxon>
        <taxon>Ralstonia</taxon>
        <taxon>Ralstonia solanacearum species complex</taxon>
    </lineage>
</organism>
<reference key="1">
    <citation type="journal article" date="2002" name="Nature">
        <title>Genome sequence of the plant pathogen Ralstonia solanacearum.</title>
        <authorList>
            <person name="Salanoubat M."/>
            <person name="Genin S."/>
            <person name="Artiguenave F."/>
            <person name="Gouzy J."/>
            <person name="Mangenot S."/>
            <person name="Arlat M."/>
            <person name="Billault A."/>
            <person name="Brottier P."/>
            <person name="Camus J.-C."/>
            <person name="Cattolico L."/>
            <person name="Chandler M."/>
            <person name="Choisne N."/>
            <person name="Claudel-Renard C."/>
            <person name="Cunnac S."/>
            <person name="Demange N."/>
            <person name="Gaspin C."/>
            <person name="Lavie M."/>
            <person name="Moisan A."/>
            <person name="Robert C."/>
            <person name="Saurin W."/>
            <person name="Schiex T."/>
            <person name="Siguier P."/>
            <person name="Thebault P."/>
            <person name="Whalen M."/>
            <person name="Wincker P."/>
            <person name="Levy M."/>
            <person name="Weissenbach J."/>
            <person name="Boucher C.A."/>
        </authorList>
    </citation>
    <scope>NUCLEOTIDE SEQUENCE [LARGE SCALE GENOMIC DNA]</scope>
    <source>
        <strain>ATCC BAA-1114 / GMI1000</strain>
    </source>
</reference>
<comment type="function">
    <text evidence="1">Responsible for the release of ribosomes from messenger RNA at the termination of protein biosynthesis. May increase the efficiency of translation by recycling ribosomes from one round of translation to another.</text>
</comment>
<comment type="subcellular location">
    <subcellularLocation>
        <location evidence="1">Cytoplasm</location>
    </subcellularLocation>
</comment>
<comment type="similarity">
    <text evidence="1">Belongs to the RRF family.</text>
</comment>
<sequence length="186" mass="20845">MSVADIKKSAEQKMQKSIDAFKADLAKVRTGRAHTGLLDHVQVDYYGSMVPISQVANLGLADARTISVQPWEKKMVSAVERAIRDADLGLNPATMGEVIRVPMPPLTEERRKELTKVVKSEGEDAKVAVRNVRRDANEQFKKLVKDKAISEDDERRGQDEVQKLTDRFVAEVDKLVAEKDKEIMTV</sequence>
<feature type="chain" id="PRO_0000167522" description="Ribosome-recycling factor">
    <location>
        <begin position="1"/>
        <end position="186"/>
    </location>
</feature>
<name>RRF_RALN1</name>
<proteinExistence type="inferred from homology"/>